<feature type="transit peptide" description="Mitochondrion" evidence="9 18">
    <location>
        <begin position="1"/>
        <end position="30"/>
    </location>
</feature>
<feature type="chain" id="PRO_0000141612" description="Glutaredoxin-2">
    <location>
        <begin position="31"/>
        <end position="143"/>
    </location>
</feature>
<feature type="domain" description="Glutaredoxin" evidence="1">
    <location>
        <begin position="41"/>
        <end position="143"/>
    </location>
</feature>
<feature type="binding site" evidence="8">
    <location>
        <begin position="58"/>
        <end position="63"/>
    </location>
    <ligand>
        <name>glutathione</name>
        <dbReference type="ChEBI" id="CHEBI:57925"/>
    </ligand>
</feature>
<feature type="binding site" evidence="8">
    <location>
        <position position="109"/>
    </location>
    <ligand>
        <name>glutathione</name>
        <dbReference type="ChEBI" id="CHEBI:57925"/>
    </ligand>
</feature>
<feature type="binding site" evidence="8">
    <location>
        <begin position="122"/>
        <end position="123"/>
    </location>
    <ligand>
        <name>glutathione</name>
        <dbReference type="ChEBI" id="CHEBI:57925"/>
    </ligand>
</feature>
<feature type="modified residue" description="Phosphoserine" evidence="20">
    <location>
        <position position="37"/>
    </location>
</feature>
<feature type="modified residue" description="S-glutathionyl cysteine; alternate" evidence="8">
    <location>
        <position position="61"/>
    </location>
</feature>
<feature type="modified residue" description="Phosphoserine" evidence="20 21">
    <location>
        <position position="91"/>
    </location>
</feature>
<feature type="disulfide bond" description="Redox-active; alternate" evidence="10">
    <location>
        <begin position="61"/>
        <end position="64"/>
    </location>
</feature>
<feature type="splice variant" id="VSP_060434" description="In isoform Cytoplasmic." evidence="7 12">
    <location>
        <begin position="1"/>
        <end position="34"/>
    </location>
</feature>
<feature type="mutagenesis site" description="Loss of the mitochondrial isoform." evidence="7">
    <original>M</original>
    <variation>V</variation>
    <location>
        <position position="1"/>
    </location>
</feature>
<feature type="mutagenesis site" description="Loss of the cytoplasmic isoform." evidence="7">
    <original>M</original>
    <variation>V</variation>
    <location>
        <position position="35"/>
    </location>
</feature>
<feature type="mutagenesis site" description="Leads to 30 percent decreased oxidoreductase activity." evidence="8">
    <original>C</original>
    <variation>S</variation>
    <location>
        <position position="64"/>
    </location>
</feature>
<feature type="mutagenesis site" description="Leads to decreased oxidoreductase activity." evidence="10">
    <original>S</original>
    <variation>D</variation>
    <location>
        <position position="123"/>
    </location>
</feature>
<feature type="helix" evidence="22">
    <location>
        <begin position="38"/>
        <end position="50"/>
    </location>
</feature>
<feature type="strand" evidence="22">
    <location>
        <begin position="51"/>
        <end position="57"/>
    </location>
</feature>
<feature type="helix" evidence="22">
    <location>
        <begin position="62"/>
        <end position="72"/>
    </location>
</feature>
<feature type="helix" evidence="22">
    <location>
        <begin position="79"/>
        <end position="81"/>
    </location>
</feature>
<feature type="strand" evidence="22">
    <location>
        <begin position="82"/>
        <end position="86"/>
    </location>
</feature>
<feature type="helix" evidence="22">
    <location>
        <begin position="87"/>
        <end position="89"/>
    </location>
</feature>
<feature type="helix" evidence="22">
    <location>
        <begin position="93"/>
        <end position="104"/>
    </location>
</feature>
<feature type="strand" evidence="22">
    <location>
        <begin position="111"/>
        <end position="114"/>
    </location>
</feature>
<feature type="strand" evidence="22">
    <location>
        <begin position="117"/>
        <end position="121"/>
    </location>
</feature>
<feature type="helix" evidence="22">
    <location>
        <begin position="122"/>
        <end position="130"/>
    </location>
</feature>
<feature type="helix" evidence="22">
    <location>
        <begin position="133"/>
        <end position="137"/>
    </location>
</feature>
<feature type="turn" evidence="22">
    <location>
        <begin position="138"/>
        <end position="141"/>
    </location>
</feature>
<feature type="initiator methionine" description="Removed" evidence="7">
    <location sequence="P17695-2">
        <position position="1"/>
    </location>
</feature>
<name>GLRX2_YEAST</name>
<accession>P17695</accession>
<accession>D6VTD4</accession>
<accession>Q6B234</accession>
<protein>
    <recommendedName>
        <fullName evidence="16">Glutaredoxin-2</fullName>
        <ecNumber evidence="3">1.11.1.9</ecNumber>
        <ecNumber evidence="5">2.5.1.18</ecNumber>
    </recommendedName>
    <alternativeName>
        <fullName>Glutathione-dependent oxidoreductase 2</fullName>
    </alternativeName>
    <alternativeName>
        <fullName evidence="15">Thioltransferase</fullName>
    </alternativeName>
</protein>
<comment type="function">
    <text evidence="3 5 8 10 11 13">Component of the glutathione system which performs several activities such as glutathione-dependent oxidoreductase, glutathione peroxidase and glutathione S-transferase (GST) activity (PubMed:11875065, PubMed:12684511). The disulfide bond functions as an electron carrier in the glutathione-dependent synthesis of deoxyribonucleotides by the enzyme ribonucleotide reductase. In addition, it is also involved in reducing cytosolic protein- and non-protein-disulfides in a coupled system with glutathione reductase. Required for resistance to reactive oxygen species (ROS) by directly reducing hydroperoxides and for the detoxification of ROS-mediated damage. GRX2 is more active as an oxidoreductase than GRX1 (PubMed:18992757, PubMed:20417731, PubMed:9571241). Responsible for the S-glutathionylation of DHBP synthase (PubMed:21565288).</text>
</comment>
<comment type="catalytic activity">
    <reaction evidence="3">
        <text>2 glutathione + H2O2 = glutathione disulfide + 2 H2O</text>
        <dbReference type="Rhea" id="RHEA:16833"/>
        <dbReference type="ChEBI" id="CHEBI:15377"/>
        <dbReference type="ChEBI" id="CHEBI:16240"/>
        <dbReference type="ChEBI" id="CHEBI:57925"/>
        <dbReference type="ChEBI" id="CHEBI:58297"/>
        <dbReference type="EC" id="1.11.1.9"/>
    </reaction>
</comment>
<comment type="catalytic activity">
    <reaction evidence="5">
        <text>1-chloro-2,4-dinitrobenzene + glutathione = 2,4-dinitrophenyl-S-glutathione + chloride + H(+)</text>
        <dbReference type="Rhea" id="RHEA:51220"/>
        <dbReference type="ChEBI" id="CHEBI:15378"/>
        <dbReference type="ChEBI" id="CHEBI:17996"/>
        <dbReference type="ChEBI" id="CHEBI:34718"/>
        <dbReference type="ChEBI" id="CHEBI:57925"/>
        <dbReference type="ChEBI" id="CHEBI:133977"/>
        <dbReference type="EC" id="2.5.1.18"/>
    </reaction>
</comment>
<comment type="catalytic activity">
    <reaction evidence="5">
        <text>RX + glutathione = an S-substituted glutathione + a halide anion + H(+)</text>
        <dbReference type="Rhea" id="RHEA:16437"/>
        <dbReference type="ChEBI" id="CHEBI:15378"/>
        <dbReference type="ChEBI" id="CHEBI:16042"/>
        <dbReference type="ChEBI" id="CHEBI:17792"/>
        <dbReference type="ChEBI" id="CHEBI:57925"/>
        <dbReference type="ChEBI" id="CHEBI:90779"/>
        <dbReference type="EC" id="2.5.1.18"/>
    </reaction>
</comment>
<comment type="biophysicochemical properties">
    <kinetics>
        <KM evidence="5">2 mM for H(2)O(2)</KM>
        <KM evidence="5">2.2 mM for tert-butyl hydroperoxide</KM>
        <KM evidence="5">0.87 mM for cumene hydroperoxide</KM>
        <KM evidence="5">0.17 mM for 1-chloro-2,4-dinitrobenzene</KM>
        <KM evidence="5">0.27 mM for 1,2-dichloro-4-nitrobenzene</KM>
        <KM evidence="8">0.9 mM for reduced glutathione</KM>
    </kinetics>
</comment>
<comment type="subcellular location">
    <molecule>Isoform Cytoplasmic</molecule>
    <subcellularLocation>
        <location evidence="4 7">Cytoplasm</location>
    </subcellularLocation>
</comment>
<comment type="subcellular location">
    <molecule>Isoform Mitochondrial</molecule>
    <subcellularLocation>
        <location evidence="4 7">Mitochondrion</location>
    </subcellularLocation>
</comment>
<comment type="alternative products">
    <event type="alternative initiation"/>
    <isoform>
        <id>P17695-1</id>
        <name evidence="14">Mitochondrial</name>
        <sequence type="displayed"/>
    </isoform>
    <isoform>
        <id>P17695-2</id>
        <name evidence="14">Cytoplasmic</name>
        <sequence type="described" ref="VSP_060434"/>
    </isoform>
</comment>
<comment type="induction">
    <text evidence="2 13">In response to exposure to reactive oxygen species (ROS) and upon entry into stationary phase.</text>
</comment>
<comment type="miscellaneous">
    <text evidence="6">Present with 31400 molecules/cell in log phase SD medium.</text>
</comment>
<comment type="miscellaneous">
    <text evidence="18 19">It is unclear whether the long polypeptide observed in mitochondria represents the immature form of the protein before cleavage of the transit peptide and release of the short form into the cytoplasm or whether two mature isoforms exists.</text>
</comment>
<comment type="similarity">
    <text evidence="17">Belongs to the glutaredoxin family.</text>
</comment>
<comment type="sequence caution" evidence="17">
    <conflict type="erroneous initiation">
        <sequence resource="EMBL-CDS" id="AAB23389"/>
    </conflict>
    <text>Truncated N-terminus.</text>
</comment>
<gene>
    <name type="primary">GRX2</name>
    <name type="synonym">TTR</name>
    <name type="synonym">TTR1</name>
    <name type="ordered locus">YDR513W</name>
    <name type="ORF">D9719.17</name>
</gene>
<sequence>METNFSFDSNLIVIIIITLFATRIIAKRFLSTPKMVSQETVAHVKDLIGQKEVFVAAKTYCPYCKATLSTLFQELNVPKSKALVLELDEMSNGSEIQDALEEISGQKTVPNVYINGKHIGGNSDLETLKKNGKLAEILKPVFQ</sequence>
<dbReference type="EC" id="1.11.1.9" evidence="3"/>
<dbReference type="EC" id="2.5.1.18" evidence="5"/>
<dbReference type="EMBL" id="S45268">
    <property type="protein sequence ID" value="AAB23389.1"/>
    <property type="status" value="ALT_INIT"/>
    <property type="molecule type" value="Genomic_DNA"/>
</dbReference>
<dbReference type="EMBL" id="U33057">
    <property type="protein sequence ID" value="AAB64953.1"/>
    <property type="molecule type" value="Genomic_DNA"/>
</dbReference>
<dbReference type="EMBL" id="AY692896">
    <property type="protein sequence ID" value="AAT92915.1"/>
    <property type="molecule type" value="Genomic_DNA"/>
</dbReference>
<dbReference type="EMBL" id="BK006938">
    <property type="protein sequence ID" value="DAA12344.1"/>
    <property type="molecule type" value="Genomic_DNA"/>
</dbReference>
<dbReference type="PIR" id="S69570">
    <property type="entry name" value="GDBY"/>
</dbReference>
<dbReference type="RefSeq" id="NP_010801.1">
    <molecule id="P17695-1"/>
    <property type="nucleotide sequence ID" value="NM_001180821.1"/>
</dbReference>
<dbReference type="PDB" id="3CTF">
    <property type="method" value="X-ray"/>
    <property type="resolution" value="2.10 A"/>
    <property type="chains" value="A=35-143"/>
</dbReference>
<dbReference type="PDB" id="3CTG">
    <property type="method" value="X-ray"/>
    <property type="resolution" value="1.50 A"/>
    <property type="chains" value="A=35-143"/>
</dbReference>
<dbReference type="PDB" id="3D4M">
    <property type="method" value="X-ray"/>
    <property type="resolution" value="2.05 A"/>
    <property type="chains" value="A=35-143"/>
</dbReference>
<dbReference type="PDB" id="3D5J">
    <property type="method" value="X-ray"/>
    <property type="resolution" value="1.91 A"/>
    <property type="chains" value="A/B=35-143"/>
</dbReference>
<dbReference type="PDBsum" id="3CTF"/>
<dbReference type="PDBsum" id="3CTG"/>
<dbReference type="PDBsum" id="3D4M"/>
<dbReference type="PDBsum" id="3D5J"/>
<dbReference type="SMR" id="P17695"/>
<dbReference type="BioGRID" id="32563">
    <property type="interactions" value="122"/>
</dbReference>
<dbReference type="DIP" id="DIP-5271N"/>
<dbReference type="FunCoup" id="P17695">
    <property type="interactions" value="743"/>
</dbReference>
<dbReference type="IntAct" id="P17695">
    <property type="interactions" value="9"/>
</dbReference>
<dbReference type="STRING" id="4932.YDR513W"/>
<dbReference type="iPTMnet" id="P17695"/>
<dbReference type="PaxDb" id="4932-YDR513W"/>
<dbReference type="PeptideAtlas" id="P17695"/>
<dbReference type="EnsemblFungi" id="YDR513W_mRNA">
    <molecule id="P17695-1"/>
    <property type="protein sequence ID" value="YDR513W"/>
    <property type="gene ID" value="YDR513W"/>
</dbReference>
<dbReference type="GeneID" id="852124"/>
<dbReference type="KEGG" id="sce:YDR513W"/>
<dbReference type="AGR" id="SGD:S000002921"/>
<dbReference type="SGD" id="S000002921">
    <property type="gene designation" value="GRX2"/>
</dbReference>
<dbReference type="VEuPathDB" id="FungiDB:YDR513W"/>
<dbReference type="eggNOG" id="KOG1752">
    <property type="taxonomic scope" value="Eukaryota"/>
</dbReference>
<dbReference type="GeneTree" id="ENSGT00940000162420"/>
<dbReference type="HOGENOM" id="CLU_026126_7_2_1"/>
<dbReference type="InParanoid" id="P17695"/>
<dbReference type="OMA" id="IYTSPLC"/>
<dbReference type="OrthoDB" id="418495at2759"/>
<dbReference type="BioCyc" id="YEAST:MONOMER3O-490"/>
<dbReference type="SABIO-RK" id="P17695"/>
<dbReference type="BioGRID-ORCS" id="852124">
    <property type="hits" value="4 hits in 10 CRISPR screens"/>
</dbReference>
<dbReference type="EvolutionaryTrace" id="P17695"/>
<dbReference type="PRO" id="PR:P17695"/>
<dbReference type="Proteomes" id="UP000002311">
    <property type="component" value="Chromosome IV"/>
</dbReference>
<dbReference type="RNAct" id="P17695">
    <property type="molecule type" value="protein"/>
</dbReference>
<dbReference type="GO" id="GO:0005737">
    <property type="term" value="C:cytoplasm"/>
    <property type="evidence" value="ECO:0000318"/>
    <property type="project" value="GO_Central"/>
</dbReference>
<dbReference type="GO" id="GO:0005829">
    <property type="term" value="C:cytosol"/>
    <property type="evidence" value="ECO:0000314"/>
    <property type="project" value="SGD"/>
</dbReference>
<dbReference type="GO" id="GO:0005739">
    <property type="term" value="C:mitochondrion"/>
    <property type="evidence" value="ECO:0000314"/>
    <property type="project" value="SGD"/>
</dbReference>
<dbReference type="GO" id="GO:0005634">
    <property type="term" value="C:nucleus"/>
    <property type="evidence" value="ECO:0007005"/>
    <property type="project" value="SGD"/>
</dbReference>
<dbReference type="GO" id="GO:0015036">
    <property type="term" value="F:disulfide oxidoreductase activity"/>
    <property type="evidence" value="ECO:0000315"/>
    <property type="project" value="SGD"/>
</dbReference>
<dbReference type="GO" id="GO:0015038">
    <property type="term" value="F:glutathione disulfide oxidoreductase activity"/>
    <property type="evidence" value="ECO:0000318"/>
    <property type="project" value="GO_Central"/>
</dbReference>
<dbReference type="GO" id="GO:0004602">
    <property type="term" value="F:glutathione peroxidase activity"/>
    <property type="evidence" value="ECO:0000314"/>
    <property type="project" value="SGD"/>
</dbReference>
<dbReference type="GO" id="GO:0004364">
    <property type="term" value="F:glutathione transferase activity"/>
    <property type="evidence" value="ECO:0000314"/>
    <property type="project" value="SGD"/>
</dbReference>
<dbReference type="GO" id="GO:0034599">
    <property type="term" value="P:cellular response to oxidative stress"/>
    <property type="evidence" value="ECO:0000315"/>
    <property type="project" value="SGD"/>
</dbReference>
<dbReference type="GO" id="GO:0006749">
    <property type="term" value="P:glutathione metabolic process"/>
    <property type="evidence" value="ECO:0000316"/>
    <property type="project" value="SGD"/>
</dbReference>
<dbReference type="CDD" id="cd03419">
    <property type="entry name" value="GRX_GRXh_1_2_like"/>
    <property type="match status" value="1"/>
</dbReference>
<dbReference type="FunFam" id="3.40.30.10:FF:000026">
    <property type="entry name" value="Glutaredoxin 2"/>
    <property type="match status" value="1"/>
</dbReference>
<dbReference type="Gene3D" id="3.40.30.10">
    <property type="entry name" value="Glutaredoxin"/>
    <property type="match status" value="1"/>
</dbReference>
<dbReference type="InterPro" id="IPR011767">
    <property type="entry name" value="GLR_AS"/>
</dbReference>
<dbReference type="InterPro" id="IPR002109">
    <property type="entry name" value="Glutaredoxin"/>
</dbReference>
<dbReference type="InterPro" id="IPR011899">
    <property type="entry name" value="Glutaredoxin_euk/vir"/>
</dbReference>
<dbReference type="InterPro" id="IPR014025">
    <property type="entry name" value="Glutaredoxin_subgr"/>
</dbReference>
<dbReference type="InterPro" id="IPR036249">
    <property type="entry name" value="Thioredoxin-like_sf"/>
</dbReference>
<dbReference type="NCBIfam" id="TIGR02180">
    <property type="entry name" value="GRX_euk"/>
    <property type="match status" value="1"/>
</dbReference>
<dbReference type="PANTHER" id="PTHR45694">
    <property type="entry name" value="GLUTAREDOXIN 2"/>
    <property type="match status" value="1"/>
</dbReference>
<dbReference type="PANTHER" id="PTHR45694:SF18">
    <property type="entry name" value="GLUTAREDOXIN-1-RELATED"/>
    <property type="match status" value="1"/>
</dbReference>
<dbReference type="Pfam" id="PF00462">
    <property type="entry name" value="Glutaredoxin"/>
    <property type="match status" value="1"/>
</dbReference>
<dbReference type="PRINTS" id="PR00160">
    <property type="entry name" value="GLUTAREDOXIN"/>
</dbReference>
<dbReference type="SUPFAM" id="SSF52833">
    <property type="entry name" value="Thioredoxin-like"/>
    <property type="match status" value="1"/>
</dbReference>
<dbReference type="PROSITE" id="PS00195">
    <property type="entry name" value="GLUTAREDOXIN_1"/>
    <property type="match status" value="1"/>
</dbReference>
<dbReference type="PROSITE" id="PS51354">
    <property type="entry name" value="GLUTAREDOXIN_2"/>
    <property type="match status" value="1"/>
</dbReference>
<organism>
    <name type="scientific">Saccharomyces cerevisiae (strain ATCC 204508 / S288c)</name>
    <name type="common">Baker's yeast</name>
    <dbReference type="NCBI Taxonomy" id="559292"/>
    <lineage>
        <taxon>Eukaryota</taxon>
        <taxon>Fungi</taxon>
        <taxon>Dikarya</taxon>
        <taxon>Ascomycota</taxon>
        <taxon>Saccharomycotina</taxon>
        <taxon>Saccharomycetes</taxon>
        <taxon>Saccharomycetales</taxon>
        <taxon>Saccharomycetaceae</taxon>
        <taxon>Saccharomyces</taxon>
    </lineage>
</organism>
<proteinExistence type="evidence at protein level"/>
<reference key="1">
    <citation type="journal article" date="1992" name="Biochem. Biophys. Res. Commun.">
        <title>Cloning and sequencing of a gene encoding yeast thioltransferase.</title>
        <authorList>
            <person name="Gan Z.-R."/>
        </authorList>
    </citation>
    <scope>NUCLEOTIDE SEQUENCE [GENOMIC DNA]</scope>
    <source>
        <strain>DMY6</strain>
    </source>
</reference>
<reference key="2">
    <citation type="journal article" date="1997" name="Nature">
        <title>The nucleotide sequence of Saccharomyces cerevisiae chromosome IV.</title>
        <authorList>
            <person name="Jacq C."/>
            <person name="Alt-Moerbe J."/>
            <person name="Andre B."/>
            <person name="Arnold W."/>
            <person name="Bahr A."/>
            <person name="Ballesta J.P.G."/>
            <person name="Bargues M."/>
            <person name="Baron L."/>
            <person name="Becker A."/>
            <person name="Biteau N."/>
            <person name="Bloecker H."/>
            <person name="Blugeon C."/>
            <person name="Boskovic J."/>
            <person name="Brandt P."/>
            <person name="Brueckner M."/>
            <person name="Buitrago M.J."/>
            <person name="Coster F."/>
            <person name="Delaveau T."/>
            <person name="del Rey F."/>
            <person name="Dujon B."/>
            <person name="Eide L.G."/>
            <person name="Garcia-Cantalejo J.M."/>
            <person name="Goffeau A."/>
            <person name="Gomez-Peris A."/>
            <person name="Granotier C."/>
            <person name="Hanemann V."/>
            <person name="Hankeln T."/>
            <person name="Hoheisel J.D."/>
            <person name="Jaeger W."/>
            <person name="Jimenez A."/>
            <person name="Jonniaux J.-L."/>
            <person name="Kraemer C."/>
            <person name="Kuester H."/>
            <person name="Laamanen P."/>
            <person name="Legros Y."/>
            <person name="Louis E.J."/>
            <person name="Moeller-Rieker S."/>
            <person name="Monnet A."/>
            <person name="Moro M."/>
            <person name="Mueller-Auer S."/>
            <person name="Nussbaumer B."/>
            <person name="Paricio N."/>
            <person name="Paulin L."/>
            <person name="Perea J."/>
            <person name="Perez-Alonso M."/>
            <person name="Perez-Ortin J.E."/>
            <person name="Pohl T.M."/>
            <person name="Prydz H."/>
            <person name="Purnelle B."/>
            <person name="Rasmussen S.W."/>
            <person name="Remacha M.A."/>
            <person name="Revuelta J.L."/>
            <person name="Rieger M."/>
            <person name="Salom D."/>
            <person name="Saluz H.P."/>
            <person name="Saiz J.E."/>
            <person name="Saren A.-M."/>
            <person name="Schaefer M."/>
            <person name="Scharfe M."/>
            <person name="Schmidt E.R."/>
            <person name="Schneider C."/>
            <person name="Scholler P."/>
            <person name="Schwarz S."/>
            <person name="Soler-Mira A."/>
            <person name="Urrestarazu L.A."/>
            <person name="Verhasselt P."/>
            <person name="Vissers S."/>
            <person name="Voet M."/>
            <person name="Volckaert G."/>
            <person name="Wagner G."/>
            <person name="Wambutt R."/>
            <person name="Wedler E."/>
            <person name="Wedler H."/>
            <person name="Woelfl S."/>
            <person name="Harris D.E."/>
            <person name="Bowman S."/>
            <person name="Brown D."/>
            <person name="Churcher C.M."/>
            <person name="Connor R."/>
            <person name="Dedman K."/>
            <person name="Gentles S."/>
            <person name="Hamlin N."/>
            <person name="Hunt S."/>
            <person name="Jones L."/>
            <person name="McDonald S."/>
            <person name="Murphy L.D."/>
            <person name="Niblett D."/>
            <person name="Odell C."/>
            <person name="Oliver K."/>
            <person name="Rajandream M.A."/>
            <person name="Richards C."/>
            <person name="Shore L."/>
            <person name="Walsh S.V."/>
            <person name="Barrell B.G."/>
            <person name="Dietrich F.S."/>
            <person name="Mulligan J.T."/>
            <person name="Allen E."/>
            <person name="Araujo R."/>
            <person name="Aviles E."/>
            <person name="Berno A."/>
            <person name="Carpenter J."/>
            <person name="Chen E."/>
            <person name="Cherry J.M."/>
            <person name="Chung E."/>
            <person name="Duncan M."/>
            <person name="Hunicke-Smith S."/>
            <person name="Hyman R.W."/>
            <person name="Komp C."/>
            <person name="Lashkari D."/>
            <person name="Lew H."/>
            <person name="Lin D."/>
            <person name="Mosedale D."/>
            <person name="Nakahara K."/>
            <person name="Namath A."/>
            <person name="Oefner P."/>
            <person name="Oh C."/>
            <person name="Petel F.X."/>
            <person name="Roberts D."/>
            <person name="Schramm S."/>
            <person name="Schroeder M."/>
            <person name="Shogren T."/>
            <person name="Shroff N."/>
            <person name="Winant A."/>
            <person name="Yelton M.A."/>
            <person name="Botstein D."/>
            <person name="Davis R.W."/>
            <person name="Johnston M."/>
            <person name="Andrews S."/>
            <person name="Brinkman R."/>
            <person name="Cooper J."/>
            <person name="Ding H."/>
            <person name="Du Z."/>
            <person name="Favello A."/>
            <person name="Fulton L."/>
            <person name="Gattung S."/>
            <person name="Greco T."/>
            <person name="Hallsworth K."/>
            <person name="Hawkins J."/>
            <person name="Hillier L.W."/>
            <person name="Jier M."/>
            <person name="Johnson D."/>
            <person name="Johnston L."/>
            <person name="Kirsten J."/>
            <person name="Kucaba T."/>
            <person name="Langston Y."/>
            <person name="Latreille P."/>
            <person name="Le T."/>
            <person name="Mardis E."/>
            <person name="Menezes S."/>
            <person name="Miller N."/>
            <person name="Nhan M."/>
            <person name="Pauley A."/>
            <person name="Peluso D."/>
            <person name="Rifkin L."/>
            <person name="Riles L."/>
            <person name="Taich A."/>
            <person name="Trevaskis E."/>
            <person name="Vignati D."/>
            <person name="Wilcox L."/>
            <person name="Wohldman P."/>
            <person name="Vaudin M."/>
            <person name="Wilson R."/>
            <person name="Waterston R."/>
            <person name="Albermann K."/>
            <person name="Hani J."/>
            <person name="Heumann K."/>
            <person name="Kleine K."/>
            <person name="Mewes H.-W."/>
            <person name="Zollner A."/>
            <person name="Zaccaria P."/>
        </authorList>
    </citation>
    <scope>NUCLEOTIDE SEQUENCE [LARGE SCALE GENOMIC DNA]</scope>
    <source>
        <strain>ATCC 204508 / S288c</strain>
    </source>
</reference>
<reference key="3">
    <citation type="journal article" date="2014" name="G3 (Bethesda)">
        <title>The reference genome sequence of Saccharomyces cerevisiae: Then and now.</title>
        <authorList>
            <person name="Engel S.R."/>
            <person name="Dietrich F.S."/>
            <person name="Fisk D.G."/>
            <person name="Binkley G."/>
            <person name="Balakrishnan R."/>
            <person name="Costanzo M.C."/>
            <person name="Dwight S.S."/>
            <person name="Hitz B.C."/>
            <person name="Karra K."/>
            <person name="Nash R.S."/>
            <person name="Weng S."/>
            <person name="Wong E.D."/>
            <person name="Lloyd P."/>
            <person name="Skrzypek M.S."/>
            <person name="Miyasato S.R."/>
            <person name="Simison M."/>
            <person name="Cherry J.M."/>
        </authorList>
    </citation>
    <scope>GENOME REANNOTATION</scope>
    <source>
        <strain>ATCC 204508 / S288c</strain>
    </source>
</reference>
<reference key="4">
    <citation type="journal article" date="2007" name="Genome Res.">
        <title>Approaching a complete repository of sequence-verified protein-encoding clones for Saccharomyces cerevisiae.</title>
        <authorList>
            <person name="Hu Y."/>
            <person name="Rolfs A."/>
            <person name="Bhullar B."/>
            <person name="Murthy T.V.S."/>
            <person name="Zhu C."/>
            <person name="Berger M.F."/>
            <person name="Camargo A.A."/>
            <person name="Kelley F."/>
            <person name="McCarron S."/>
            <person name="Jepson D."/>
            <person name="Richardson A."/>
            <person name="Raphael J."/>
            <person name="Moreira D."/>
            <person name="Taycher E."/>
            <person name="Zuo D."/>
            <person name="Mohr S."/>
            <person name="Kane M.F."/>
            <person name="Williamson J."/>
            <person name="Simpson A.J.G."/>
            <person name="Bulyk M.L."/>
            <person name="Harlow E."/>
            <person name="Marsischky G."/>
            <person name="Kolodner R.D."/>
            <person name="LaBaer J."/>
        </authorList>
    </citation>
    <scope>NUCLEOTIDE SEQUENCE [GENOMIC DNA]</scope>
    <source>
        <strain>ATCC 204508 / S288c</strain>
    </source>
</reference>
<reference key="5">
    <citation type="journal article" date="2010" name="Biochim. Biophys. Acta">
        <title>Structure and function of yeast glutaredoxin 2 depend on postranslational processing and are related to subcellular distribution.</title>
        <authorList>
            <person name="Porras P."/>
            <person name="McDonagh B."/>
            <person name="Pedrajas J.R."/>
            <person name="Barcena J.A."/>
            <person name="Padilla C.A."/>
        </authorList>
    </citation>
    <scope>PROTEIN SEQUENCE OF 31-45</scope>
    <scope>PROCESSING BY MPP</scope>
</reference>
<reference key="6">
    <citation type="journal article" date="1990" name="Biochem. Biophys. Res. Commun.">
        <title>Complete amino acid sequence of yeast thioltransferase (glutaredoxin).</title>
        <authorList>
            <person name="Gan Z.-R."/>
            <person name="Polokoff M.A."/>
            <person name="Jacobs J.W."/>
            <person name="Sardana M.K."/>
        </authorList>
    </citation>
    <scope>PROTEIN SEQUENCE OF 36-141</scope>
</reference>
<reference key="7">
    <citation type="journal article" date="1998" name="Mol. Biol. Cell">
        <title>The yeast Saccharomyces cerevisiae contains two glutaredoxin genes that are required for protection against reactive oxygen species.</title>
        <authorList>
            <person name="Luikenhuis S."/>
            <person name="Perrone G."/>
            <person name="Dawes I.W."/>
            <person name="Grant C.M."/>
        </authorList>
    </citation>
    <scope>FUNCTION</scope>
    <scope>INDUCTION</scope>
</reference>
<reference key="8">
    <citation type="journal article" date="2000" name="Biochim. Biophys. Acta">
        <title>Differential regulation of glutaredoxin gene expression in response to stress conditions in the yeast Saccharomyces cerevisiae.</title>
        <authorList>
            <person name="Grant C.M."/>
            <person name="Luikenhuis S."/>
            <person name="Beckhouse A."/>
            <person name="Soderbergh M."/>
            <person name="Dawes I.W."/>
        </authorList>
    </citation>
    <scope>INDUCTION</scope>
</reference>
<reference key="9">
    <citation type="journal article" date="2002" name="Biochem. J.">
        <title>Two isoforms of Saccharomyces cerevisiae glutaredoxin 2 are expressed in vivo and localize to different subcellular compartments.</title>
        <authorList>
            <person name="Pedrajas J.R."/>
            <person name="Porras P."/>
            <person name="Martinez-Galisteo E."/>
            <person name="Padilla C.A."/>
            <person name="Miranda-Vizuete A."/>
            <person name="Barcena J.A."/>
        </authorList>
    </citation>
    <scope>SUBCELLULAR LOCATION</scope>
</reference>
<reference key="10">
    <citation type="journal article" date="2002" name="J. Biol. Chem.">
        <title>The yeast glutaredoxins are active as glutathione peroxidases.</title>
        <authorList>
            <person name="Collinson E.J."/>
            <person name="Wheeler G.L."/>
            <person name="Garrido E.O."/>
            <person name="Avery A.M."/>
            <person name="Avery S.V."/>
            <person name="Grant C.M."/>
        </authorList>
    </citation>
    <scope>FUNCTION</scope>
    <scope>CATALYTIC ACTIVITY</scope>
</reference>
<reference key="11">
    <citation type="journal article" date="2003" name="J. Biol. Chem.">
        <title>Role of yeast glutaredoxins as glutathione S-transferases.</title>
        <authorList>
            <person name="Collinson E.J."/>
            <person name="Grant C.M."/>
        </authorList>
    </citation>
    <scope>FUNCTION</scope>
    <scope>BIOPHYSICOCHEMICAL PROPERTIES</scope>
</reference>
<reference key="12">
    <citation type="journal article" date="2003" name="Nature">
        <title>Global analysis of protein expression in yeast.</title>
        <authorList>
            <person name="Ghaemmaghami S."/>
            <person name="Huh W.-K."/>
            <person name="Bower K."/>
            <person name="Howson R.W."/>
            <person name="Belle A."/>
            <person name="Dephoure N."/>
            <person name="O'Shea E.K."/>
            <person name="Weissman J.S."/>
        </authorList>
    </citation>
    <scope>LEVEL OF PROTEIN EXPRESSION [LARGE SCALE ANALYSIS]</scope>
</reference>
<reference key="13">
    <citation type="journal article" date="2006" name="J. Biol. Chem.">
        <title>One single in-frame AUG codon is responsible for a diversity of subcellular localizations of glutaredoxin 2 in Saccharomyces cerevisiae.</title>
        <authorList>
            <person name="Porras P."/>
            <person name="Padilla C.A."/>
            <person name="Krayl M."/>
            <person name="Voos W."/>
            <person name="Barcena J.A."/>
        </authorList>
    </citation>
    <scope>ALTERNATIVE INITIATION</scope>
</reference>
<reference key="14">
    <citation type="journal article" date="2008" name="Mol. Cell. Proteomics">
        <title>A multidimensional chromatography technology for in-depth phosphoproteome analysis.</title>
        <authorList>
            <person name="Albuquerque C.P."/>
            <person name="Smolka M.B."/>
            <person name="Payne S.H."/>
            <person name="Bafna V."/>
            <person name="Eng J."/>
            <person name="Zhou H."/>
        </authorList>
    </citation>
    <scope>PHOSPHORYLATION [LARGE SCALE ANALYSIS] AT SER-37 AND SER-91</scope>
    <scope>IDENTIFICATION BY MASS SPECTROMETRY [LARGE SCALE ANALYSIS]</scope>
</reference>
<reference key="15">
    <citation type="journal article" date="2009" name="Science">
        <title>Global analysis of Cdk1 substrate phosphorylation sites provides insights into evolution.</title>
        <authorList>
            <person name="Holt L.J."/>
            <person name="Tuch B.B."/>
            <person name="Villen J."/>
            <person name="Johnson A.D."/>
            <person name="Gygi S.P."/>
            <person name="Morgan D.O."/>
        </authorList>
    </citation>
    <scope>PHOSPHORYLATION [LARGE SCALE ANALYSIS] AT SER-91</scope>
    <scope>IDENTIFICATION BY MASS SPECTROMETRY [LARGE SCALE ANALYSIS]</scope>
</reference>
<reference key="16">
    <citation type="journal article" date="2011" name="J. Proteomics">
        <title>Thiol redox proteomics identifies differential targets of cytosolic and mitochondrial glutaredoxin-2 isoforms in Saccharomyces cerevisiae. Reversible S-glutathionylation of DHBP synthase (RIB3).</title>
        <authorList>
            <person name="McDonagh B."/>
            <person name="Requejo R."/>
            <person name="Fuentes-Almagro C.A."/>
            <person name="Ogueta S."/>
            <person name="Barcena J.A."/>
            <person name="Padilla C.A."/>
        </authorList>
    </citation>
    <scope>FUNCTION</scope>
</reference>
<reference key="17">
    <citation type="journal article" date="2009" name="J. Mol. Biol.">
        <title>Structural aspects of the distinct biochemical properties of glutaredoxin 1 and glutaredoxin 2 from Saccharomyces cerevisiae.</title>
        <authorList>
            <person name="Discola K.F."/>
            <person name="de Oliveira M.A."/>
            <person name="Rosa Cussiol J.R."/>
            <person name="Monteiro G."/>
            <person name="Barcena J.A."/>
            <person name="Porras P."/>
            <person name="Padilla C.A."/>
            <person name="Guimaraes B.G."/>
            <person name="Netto L.E."/>
        </authorList>
    </citation>
    <scope>X-RAY CRYSTALLOGRAPHY (1.91 ANGSTROMS) OF 35-143 IN COMPLEX WITH GLUTATHIONE</scope>
    <scope>FUNCTION</scope>
    <scope>BIOPHYSICOCHEMICAL PROPERTIES</scope>
    <scope>GLUTATHIONYLATION AT CYS-61</scope>
    <scope>MUTAGENESIS OF CYS-64</scope>
</reference>
<reference key="18">
    <citation type="journal article" date="2010" name="Biochim. Biophys. Acta">
        <title>Structural basis for the different activities of yeast Grx1 and Grx2.</title>
        <authorList>
            <person name="Li W.F."/>
            <person name="Yu J."/>
            <person name="Ma X.X."/>
            <person name="Teng Y.B."/>
            <person name="Luo M."/>
            <person name="Tang Y.J."/>
            <person name="Zhou C.Z."/>
        </authorList>
    </citation>
    <scope>X-RAY CRYSTALLOGRAPHY (1.50 ANGSTROMS) OF 35-143 IN COMPLEX WITH GLUTATHIONE</scope>
    <scope>DISULFIDE BOND</scope>
    <scope>MUTAGENESIS OF SER-123</scope>
    <scope>FUNCTION</scope>
    <scope>BIOPHYSICOCHEMICAL PROPERTIES</scope>
</reference>
<evidence type="ECO:0000255" key="1">
    <source>
        <dbReference type="PROSITE-ProRule" id="PRU00686"/>
    </source>
</evidence>
<evidence type="ECO:0000269" key="2">
    <source>
    </source>
</evidence>
<evidence type="ECO:0000269" key="3">
    <source>
    </source>
</evidence>
<evidence type="ECO:0000269" key="4">
    <source>
    </source>
</evidence>
<evidence type="ECO:0000269" key="5">
    <source>
    </source>
</evidence>
<evidence type="ECO:0000269" key="6">
    <source>
    </source>
</evidence>
<evidence type="ECO:0000269" key="7">
    <source>
    </source>
</evidence>
<evidence type="ECO:0000269" key="8">
    <source>
    </source>
</evidence>
<evidence type="ECO:0000269" key="9">
    <source>
    </source>
</evidence>
<evidence type="ECO:0000269" key="10">
    <source>
    </source>
</evidence>
<evidence type="ECO:0000269" key="11">
    <source>
    </source>
</evidence>
<evidence type="ECO:0000269" key="12">
    <source>
    </source>
</evidence>
<evidence type="ECO:0000269" key="13">
    <source>
    </source>
</evidence>
<evidence type="ECO:0000303" key="14">
    <source>
    </source>
</evidence>
<evidence type="ECO:0000303" key="15">
    <source>
    </source>
</evidence>
<evidence type="ECO:0000303" key="16">
    <source>
    </source>
</evidence>
<evidence type="ECO:0000305" key="17"/>
<evidence type="ECO:0000305" key="18">
    <source>
    </source>
</evidence>
<evidence type="ECO:0000305" key="19">
    <source>
    </source>
</evidence>
<evidence type="ECO:0007744" key="20">
    <source>
    </source>
</evidence>
<evidence type="ECO:0007744" key="21">
    <source>
    </source>
</evidence>
<evidence type="ECO:0007829" key="22">
    <source>
        <dbReference type="PDB" id="3CTG"/>
    </source>
</evidence>
<keyword id="KW-0002">3D-structure</keyword>
<keyword id="KW-0024">Alternative initiation</keyword>
<keyword id="KW-0963">Cytoplasm</keyword>
<keyword id="KW-0903">Direct protein sequencing</keyword>
<keyword id="KW-1015">Disulfide bond</keyword>
<keyword id="KW-0249">Electron transport</keyword>
<keyword id="KW-0318">Glutathionylation</keyword>
<keyword id="KW-0496">Mitochondrion</keyword>
<keyword id="KW-0560">Oxidoreductase</keyword>
<keyword id="KW-0597">Phosphoprotein</keyword>
<keyword id="KW-0676">Redox-active center</keyword>
<keyword id="KW-1185">Reference proteome</keyword>
<keyword id="KW-0808">Transferase</keyword>
<keyword id="KW-0809">Transit peptide</keyword>
<keyword id="KW-0813">Transport</keyword>